<comment type="function">
    <text evidence="1">Catalyzes the radical-mediated insertion of two sulfur atoms into the C-6 and C-8 positions of the octanoyl moiety bound to the lipoyl domains of lipoate-dependent enzymes, thereby converting the octanoylated domains into lipoylated derivatives.</text>
</comment>
<comment type="catalytic activity">
    <reaction evidence="1">
        <text>[[Fe-S] cluster scaffold protein carrying a second [4Fe-4S](2+) cluster] + N(6)-octanoyl-L-lysyl-[protein] + 2 oxidized [2Fe-2S]-[ferredoxin] + 2 S-adenosyl-L-methionine + 4 H(+) = [[Fe-S] cluster scaffold protein] + N(6)-[(R)-dihydrolipoyl]-L-lysyl-[protein] + 4 Fe(3+) + 2 hydrogen sulfide + 2 5'-deoxyadenosine + 2 L-methionine + 2 reduced [2Fe-2S]-[ferredoxin]</text>
        <dbReference type="Rhea" id="RHEA:16585"/>
        <dbReference type="Rhea" id="RHEA-COMP:9928"/>
        <dbReference type="Rhea" id="RHEA-COMP:10000"/>
        <dbReference type="Rhea" id="RHEA-COMP:10001"/>
        <dbReference type="Rhea" id="RHEA-COMP:10475"/>
        <dbReference type="Rhea" id="RHEA-COMP:14568"/>
        <dbReference type="Rhea" id="RHEA-COMP:14569"/>
        <dbReference type="ChEBI" id="CHEBI:15378"/>
        <dbReference type="ChEBI" id="CHEBI:17319"/>
        <dbReference type="ChEBI" id="CHEBI:29034"/>
        <dbReference type="ChEBI" id="CHEBI:29919"/>
        <dbReference type="ChEBI" id="CHEBI:33722"/>
        <dbReference type="ChEBI" id="CHEBI:33737"/>
        <dbReference type="ChEBI" id="CHEBI:33738"/>
        <dbReference type="ChEBI" id="CHEBI:57844"/>
        <dbReference type="ChEBI" id="CHEBI:59789"/>
        <dbReference type="ChEBI" id="CHEBI:78809"/>
        <dbReference type="ChEBI" id="CHEBI:83100"/>
        <dbReference type="EC" id="2.8.1.8"/>
    </reaction>
</comment>
<comment type="cofactor">
    <cofactor evidence="1">
        <name>[4Fe-4S] cluster</name>
        <dbReference type="ChEBI" id="CHEBI:49883"/>
    </cofactor>
    <text evidence="1">Binds 2 [4Fe-4S] clusters per subunit. One cluster is coordinated with 3 cysteines and an exchangeable S-adenosyl-L-methionine.</text>
</comment>
<comment type="pathway">
    <text evidence="1">Protein modification; protein lipoylation via endogenous pathway; protein N(6)-(lipoyl)lysine from octanoyl-[acyl-carrier-protein]: step 2/2.</text>
</comment>
<comment type="subcellular location">
    <subcellularLocation>
        <location evidence="1">Cytoplasm</location>
    </subcellularLocation>
</comment>
<comment type="similarity">
    <text evidence="1">Belongs to the radical SAM superfamily. Lipoyl synthase family.</text>
</comment>
<name>LIPA_AERHH</name>
<proteinExistence type="inferred from homology"/>
<sequence>MSKPVRMEPGVKLRDGDKMALIPVKFMPDPNEEVLRKPDWMRIKLPPSSQKIEHIKSTLRKNKLHSVCEEASCPNLAECFNHGTATFMIMGAICTRRCPFCDVAHGRPLALDPDEPKKLALTIKEMGLKYVVITSVDRDDLRDGGAQHFADCIKQIREHSPQTRIEILTPDFRGRMEQALEVFRETPPDVFNHNLETAPRMYRVARPGADYKWSLELLRRIKEMHPHVPTKSGVMMGLGETNEEIVQVLKDLREHGVNMLTLGQYLQPSRHHLPVKRYVPPAEFDELKDVAMGLGFSHAACGPFVRSSYHADLQAKGEEVK</sequence>
<evidence type="ECO:0000255" key="1">
    <source>
        <dbReference type="HAMAP-Rule" id="MF_00206"/>
    </source>
</evidence>
<evidence type="ECO:0000255" key="2">
    <source>
        <dbReference type="PROSITE-ProRule" id="PRU01266"/>
    </source>
</evidence>
<feature type="chain" id="PRO_1000012181" description="Lipoyl synthase">
    <location>
        <begin position="1"/>
        <end position="321"/>
    </location>
</feature>
<feature type="domain" description="Radical SAM core" evidence="2">
    <location>
        <begin position="80"/>
        <end position="297"/>
    </location>
</feature>
<feature type="binding site" evidence="1">
    <location>
        <position position="68"/>
    </location>
    <ligand>
        <name>[4Fe-4S] cluster</name>
        <dbReference type="ChEBI" id="CHEBI:49883"/>
        <label>1</label>
    </ligand>
</feature>
<feature type="binding site" evidence="1">
    <location>
        <position position="73"/>
    </location>
    <ligand>
        <name>[4Fe-4S] cluster</name>
        <dbReference type="ChEBI" id="CHEBI:49883"/>
        <label>1</label>
    </ligand>
</feature>
<feature type="binding site" evidence="1">
    <location>
        <position position="79"/>
    </location>
    <ligand>
        <name>[4Fe-4S] cluster</name>
        <dbReference type="ChEBI" id="CHEBI:49883"/>
        <label>1</label>
    </ligand>
</feature>
<feature type="binding site" evidence="1">
    <location>
        <position position="94"/>
    </location>
    <ligand>
        <name>[4Fe-4S] cluster</name>
        <dbReference type="ChEBI" id="CHEBI:49883"/>
        <label>2</label>
        <note>4Fe-4S-S-AdoMet</note>
    </ligand>
</feature>
<feature type="binding site" evidence="1">
    <location>
        <position position="98"/>
    </location>
    <ligand>
        <name>[4Fe-4S] cluster</name>
        <dbReference type="ChEBI" id="CHEBI:49883"/>
        <label>2</label>
        <note>4Fe-4S-S-AdoMet</note>
    </ligand>
</feature>
<feature type="binding site" evidence="1">
    <location>
        <position position="101"/>
    </location>
    <ligand>
        <name>[4Fe-4S] cluster</name>
        <dbReference type="ChEBI" id="CHEBI:49883"/>
        <label>2</label>
        <note>4Fe-4S-S-AdoMet</note>
    </ligand>
</feature>
<feature type="binding site" evidence="1">
    <location>
        <position position="308"/>
    </location>
    <ligand>
        <name>[4Fe-4S] cluster</name>
        <dbReference type="ChEBI" id="CHEBI:49883"/>
        <label>1</label>
    </ligand>
</feature>
<dbReference type="EC" id="2.8.1.8" evidence="1"/>
<dbReference type="EMBL" id="CP000462">
    <property type="protein sequence ID" value="ABK39331.1"/>
    <property type="molecule type" value="Genomic_DNA"/>
</dbReference>
<dbReference type="RefSeq" id="WP_011707035.1">
    <property type="nucleotide sequence ID" value="NC_008570.1"/>
</dbReference>
<dbReference type="RefSeq" id="YP_857754.1">
    <property type="nucleotide sequence ID" value="NC_008570.1"/>
</dbReference>
<dbReference type="SMR" id="A0KNA3"/>
<dbReference type="STRING" id="380703.AHA_3263"/>
<dbReference type="EnsemblBacteria" id="ABK39331">
    <property type="protein sequence ID" value="ABK39331"/>
    <property type="gene ID" value="AHA_3263"/>
</dbReference>
<dbReference type="GeneID" id="4488841"/>
<dbReference type="KEGG" id="aha:AHA_3263"/>
<dbReference type="PATRIC" id="fig|380703.7.peg.3257"/>
<dbReference type="eggNOG" id="COG0320">
    <property type="taxonomic scope" value="Bacteria"/>
</dbReference>
<dbReference type="HOGENOM" id="CLU_033144_2_1_6"/>
<dbReference type="OrthoDB" id="9787898at2"/>
<dbReference type="UniPathway" id="UPA00538">
    <property type="reaction ID" value="UER00593"/>
</dbReference>
<dbReference type="Proteomes" id="UP000000756">
    <property type="component" value="Chromosome"/>
</dbReference>
<dbReference type="GO" id="GO:0005737">
    <property type="term" value="C:cytoplasm"/>
    <property type="evidence" value="ECO:0007669"/>
    <property type="project" value="UniProtKB-SubCell"/>
</dbReference>
<dbReference type="GO" id="GO:0051539">
    <property type="term" value="F:4 iron, 4 sulfur cluster binding"/>
    <property type="evidence" value="ECO:0007669"/>
    <property type="project" value="UniProtKB-UniRule"/>
</dbReference>
<dbReference type="GO" id="GO:0016992">
    <property type="term" value="F:lipoate synthase activity"/>
    <property type="evidence" value="ECO:0007669"/>
    <property type="project" value="UniProtKB-UniRule"/>
</dbReference>
<dbReference type="GO" id="GO:0046872">
    <property type="term" value="F:metal ion binding"/>
    <property type="evidence" value="ECO:0007669"/>
    <property type="project" value="UniProtKB-KW"/>
</dbReference>
<dbReference type="CDD" id="cd01335">
    <property type="entry name" value="Radical_SAM"/>
    <property type="match status" value="1"/>
</dbReference>
<dbReference type="FunFam" id="3.20.20.70:FF:000023">
    <property type="entry name" value="Lipoyl synthase"/>
    <property type="match status" value="1"/>
</dbReference>
<dbReference type="Gene3D" id="3.20.20.70">
    <property type="entry name" value="Aldolase class I"/>
    <property type="match status" value="1"/>
</dbReference>
<dbReference type="HAMAP" id="MF_00206">
    <property type="entry name" value="Lipoyl_synth"/>
    <property type="match status" value="1"/>
</dbReference>
<dbReference type="InterPro" id="IPR013785">
    <property type="entry name" value="Aldolase_TIM"/>
</dbReference>
<dbReference type="InterPro" id="IPR006638">
    <property type="entry name" value="Elp3/MiaA/NifB-like_rSAM"/>
</dbReference>
<dbReference type="InterPro" id="IPR031691">
    <property type="entry name" value="LIAS_N"/>
</dbReference>
<dbReference type="InterPro" id="IPR003698">
    <property type="entry name" value="Lipoyl_synth"/>
</dbReference>
<dbReference type="InterPro" id="IPR007197">
    <property type="entry name" value="rSAM"/>
</dbReference>
<dbReference type="NCBIfam" id="TIGR00510">
    <property type="entry name" value="lipA"/>
    <property type="match status" value="1"/>
</dbReference>
<dbReference type="NCBIfam" id="NF004019">
    <property type="entry name" value="PRK05481.1"/>
    <property type="match status" value="1"/>
</dbReference>
<dbReference type="NCBIfam" id="NF009544">
    <property type="entry name" value="PRK12928.1"/>
    <property type="match status" value="1"/>
</dbReference>
<dbReference type="PANTHER" id="PTHR10949">
    <property type="entry name" value="LIPOYL SYNTHASE"/>
    <property type="match status" value="1"/>
</dbReference>
<dbReference type="PANTHER" id="PTHR10949:SF0">
    <property type="entry name" value="LIPOYL SYNTHASE, MITOCHONDRIAL"/>
    <property type="match status" value="1"/>
</dbReference>
<dbReference type="Pfam" id="PF16881">
    <property type="entry name" value="LIAS_N"/>
    <property type="match status" value="1"/>
</dbReference>
<dbReference type="Pfam" id="PF04055">
    <property type="entry name" value="Radical_SAM"/>
    <property type="match status" value="1"/>
</dbReference>
<dbReference type="PIRSF" id="PIRSF005963">
    <property type="entry name" value="Lipoyl_synth"/>
    <property type="match status" value="1"/>
</dbReference>
<dbReference type="SFLD" id="SFLDF00271">
    <property type="entry name" value="lipoyl_synthase"/>
    <property type="match status" value="1"/>
</dbReference>
<dbReference type="SFLD" id="SFLDS00029">
    <property type="entry name" value="Radical_SAM"/>
    <property type="match status" value="1"/>
</dbReference>
<dbReference type="SMART" id="SM00729">
    <property type="entry name" value="Elp3"/>
    <property type="match status" value="1"/>
</dbReference>
<dbReference type="SUPFAM" id="SSF102114">
    <property type="entry name" value="Radical SAM enzymes"/>
    <property type="match status" value="1"/>
</dbReference>
<dbReference type="PROSITE" id="PS51918">
    <property type="entry name" value="RADICAL_SAM"/>
    <property type="match status" value="1"/>
</dbReference>
<accession>A0KNA3</accession>
<keyword id="KW-0004">4Fe-4S</keyword>
<keyword id="KW-0963">Cytoplasm</keyword>
<keyword id="KW-0408">Iron</keyword>
<keyword id="KW-0411">Iron-sulfur</keyword>
<keyword id="KW-0479">Metal-binding</keyword>
<keyword id="KW-1185">Reference proteome</keyword>
<keyword id="KW-0949">S-adenosyl-L-methionine</keyword>
<keyword id="KW-0808">Transferase</keyword>
<protein>
    <recommendedName>
        <fullName evidence="1">Lipoyl synthase</fullName>
        <ecNumber evidence="1">2.8.1.8</ecNumber>
    </recommendedName>
    <alternativeName>
        <fullName evidence="1">Lip-syn</fullName>
        <shortName evidence="1">LS</shortName>
    </alternativeName>
    <alternativeName>
        <fullName evidence="1">Lipoate synthase</fullName>
    </alternativeName>
    <alternativeName>
        <fullName evidence="1">Lipoic acid synthase</fullName>
    </alternativeName>
    <alternativeName>
        <fullName evidence="1">Sulfur insertion protein LipA</fullName>
    </alternativeName>
</protein>
<gene>
    <name evidence="1" type="primary">lipA</name>
    <name type="ordered locus">AHA_3263</name>
</gene>
<organism>
    <name type="scientific">Aeromonas hydrophila subsp. hydrophila (strain ATCC 7966 / DSM 30187 / BCRC 13018 / CCUG 14551 / JCM 1027 / KCTC 2358 / NCIMB 9240 / NCTC 8049)</name>
    <dbReference type="NCBI Taxonomy" id="380703"/>
    <lineage>
        <taxon>Bacteria</taxon>
        <taxon>Pseudomonadati</taxon>
        <taxon>Pseudomonadota</taxon>
        <taxon>Gammaproteobacteria</taxon>
        <taxon>Aeromonadales</taxon>
        <taxon>Aeromonadaceae</taxon>
        <taxon>Aeromonas</taxon>
    </lineage>
</organism>
<reference key="1">
    <citation type="journal article" date="2006" name="J. Bacteriol.">
        <title>Genome sequence of Aeromonas hydrophila ATCC 7966T: jack of all trades.</title>
        <authorList>
            <person name="Seshadri R."/>
            <person name="Joseph S.W."/>
            <person name="Chopra A.K."/>
            <person name="Sha J."/>
            <person name="Shaw J."/>
            <person name="Graf J."/>
            <person name="Haft D.H."/>
            <person name="Wu M."/>
            <person name="Ren Q."/>
            <person name="Rosovitz M.J."/>
            <person name="Madupu R."/>
            <person name="Tallon L."/>
            <person name="Kim M."/>
            <person name="Jin S."/>
            <person name="Vuong H."/>
            <person name="Stine O.C."/>
            <person name="Ali A."/>
            <person name="Horneman A.J."/>
            <person name="Heidelberg J.F."/>
        </authorList>
    </citation>
    <scope>NUCLEOTIDE SEQUENCE [LARGE SCALE GENOMIC DNA]</scope>
    <source>
        <strain>ATCC 7966 / DSM 30187 / BCRC 13018 / CCUG 14551 / JCM 1027 / KCTC 2358 / NCIMB 9240 / NCTC 8049</strain>
    </source>
</reference>